<dbReference type="EMBL" id="CU928162">
    <property type="protein sequence ID" value="CAR06305.1"/>
    <property type="molecule type" value="Genomic_DNA"/>
</dbReference>
<dbReference type="RefSeq" id="WP_001295770.1">
    <property type="nucleotide sequence ID" value="NC_011745.1"/>
</dbReference>
<dbReference type="SMR" id="B7MNU0"/>
<dbReference type="GeneID" id="75202102"/>
<dbReference type="KEGG" id="ecq:ECED1_0082"/>
<dbReference type="HOGENOM" id="CLU_107907_2_0_6"/>
<dbReference type="Proteomes" id="UP000000748">
    <property type="component" value="Chromosome"/>
</dbReference>
<dbReference type="GO" id="GO:0005737">
    <property type="term" value="C:cytoplasm"/>
    <property type="evidence" value="ECO:0007669"/>
    <property type="project" value="UniProtKB-UniRule"/>
</dbReference>
<dbReference type="GO" id="GO:0009295">
    <property type="term" value="C:nucleoid"/>
    <property type="evidence" value="ECO:0007669"/>
    <property type="project" value="UniProtKB-SubCell"/>
</dbReference>
<dbReference type="GO" id="GO:0003700">
    <property type="term" value="F:DNA-binding transcription factor activity"/>
    <property type="evidence" value="ECO:0007669"/>
    <property type="project" value="UniProtKB-UniRule"/>
</dbReference>
<dbReference type="GO" id="GO:0000976">
    <property type="term" value="F:transcription cis-regulatory region binding"/>
    <property type="evidence" value="ECO:0007669"/>
    <property type="project" value="TreeGrafter"/>
</dbReference>
<dbReference type="GO" id="GO:2000143">
    <property type="term" value="P:negative regulation of DNA-templated transcription initiation"/>
    <property type="evidence" value="ECO:0007669"/>
    <property type="project" value="TreeGrafter"/>
</dbReference>
<dbReference type="CDD" id="cd16321">
    <property type="entry name" value="MraZ_C"/>
    <property type="match status" value="1"/>
</dbReference>
<dbReference type="CDD" id="cd16320">
    <property type="entry name" value="MraZ_N"/>
    <property type="match status" value="1"/>
</dbReference>
<dbReference type="FunFam" id="3.40.1550.20:FF:000001">
    <property type="entry name" value="Transcriptional regulator MraZ"/>
    <property type="match status" value="1"/>
</dbReference>
<dbReference type="Gene3D" id="3.40.1550.20">
    <property type="entry name" value="Transcriptional regulator MraZ domain"/>
    <property type="match status" value="1"/>
</dbReference>
<dbReference type="HAMAP" id="MF_01008">
    <property type="entry name" value="MraZ"/>
    <property type="match status" value="1"/>
</dbReference>
<dbReference type="InterPro" id="IPR003444">
    <property type="entry name" value="MraZ"/>
</dbReference>
<dbReference type="InterPro" id="IPR035644">
    <property type="entry name" value="MraZ_C"/>
</dbReference>
<dbReference type="InterPro" id="IPR020603">
    <property type="entry name" value="MraZ_dom"/>
</dbReference>
<dbReference type="InterPro" id="IPR035642">
    <property type="entry name" value="MraZ_N"/>
</dbReference>
<dbReference type="InterPro" id="IPR038619">
    <property type="entry name" value="MraZ_sf"/>
</dbReference>
<dbReference type="InterPro" id="IPR007159">
    <property type="entry name" value="SpoVT-AbrB_dom"/>
</dbReference>
<dbReference type="InterPro" id="IPR037914">
    <property type="entry name" value="SpoVT-AbrB_sf"/>
</dbReference>
<dbReference type="NCBIfam" id="TIGR00242">
    <property type="entry name" value="division/cell wall cluster transcriptional repressor MraZ"/>
    <property type="match status" value="1"/>
</dbReference>
<dbReference type="PANTHER" id="PTHR34701">
    <property type="entry name" value="TRANSCRIPTIONAL REGULATOR MRAZ"/>
    <property type="match status" value="1"/>
</dbReference>
<dbReference type="PANTHER" id="PTHR34701:SF1">
    <property type="entry name" value="TRANSCRIPTIONAL REGULATOR MRAZ"/>
    <property type="match status" value="1"/>
</dbReference>
<dbReference type="Pfam" id="PF02381">
    <property type="entry name" value="MraZ"/>
    <property type="match status" value="2"/>
</dbReference>
<dbReference type="SUPFAM" id="SSF89447">
    <property type="entry name" value="AbrB/MazE/MraZ-like"/>
    <property type="match status" value="1"/>
</dbReference>
<dbReference type="PROSITE" id="PS51740">
    <property type="entry name" value="SPOVT_ABRB"/>
    <property type="match status" value="2"/>
</dbReference>
<accession>B7MNU0</accession>
<proteinExistence type="inferred from homology"/>
<protein>
    <recommendedName>
        <fullName>Transcriptional regulator MraZ</fullName>
    </recommendedName>
</protein>
<gene>
    <name evidence="1" type="primary">mraZ</name>
    <name type="ordered locus">ECED1_0082</name>
</gene>
<sequence>MFRGATLVNLDSKGRLSVPTRYREQLLENAAGQMVCTIDIHHPCLLLYPLPEWEIIEQKLSRLSSMNPVERRVQRLLLGHASECQMDGAGRLLIAPVLRQHAGLTKEVMLVGQFNKFELWDETTWHQQVKEDIDAEQLATGDLSERLQDLSL</sequence>
<evidence type="ECO:0000255" key="1">
    <source>
        <dbReference type="HAMAP-Rule" id="MF_01008"/>
    </source>
</evidence>
<evidence type="ECO:0000255" key="2">
    <source>
        <dbReference type="PROSITE-ProRule" id="PRU01076"/>
    </source>
</evidence>
<comment type="function">
    <text evidence="1">Negatively regulates its own expression and that of the subsequent genes in the proximal part of the division and cell wall (dcw) gene cluster. Acts by binding directly to DNA. May also regulate the expression of genes outside the dcw cluster.</text>
</comment>
<comment type="subunit">
    <text evidence="1">Forms oligomers.</text>
</comment>
<comment type="subcellular location">
    <subcellularLocation>
        <location evidence="1">Cytoplasm</location>
        <location evidence="1">Nucleoid</location>
    </subcellularLocation>
</comment>
<comment type="similarity">
    <text evidence="1">Belongs to the MraZ family.</text>
</comment>
<keyword id="KW-0963">Cytoplasm</keyword>
<keyword id="KW-0238">DNA-binding</keyword>
<keyword id="KW-0677">Repeat</keyword>
<keyword id="KW-0678">Repressor</keyword>
<keyword id="KW-0804">Transcription</keyword>
<keyword id="KW-0805">Transcription regulation</keyword>
<reference key="1">
    <citation type="journal article" date="2009" name="PLoS Genet.">
        <title>Organised genome dynamics in the Escherichia coli species results in highly diverse adaptive paths.</title>
        <authorList>
            <person name="Touchon M."/>
            <person name="Hoede C."/>
            <person name="Tenaillon O."/>
            <person name="Barbe V."/>
            <person name="Baeriswyl S."/>
            <person name="Bidet P."/>
            <person name="Bingen E."/>
            <person name="Bonacorsi S."/>
            <person name="Bouchier C."/>
            <person name="Bouvet O."/>
            <person name="Calteau A."/>
            <person name="Chiapello H."/>
            <person name="Clermont O."/>
            <person name="Cruveiller S."/>
            <person name="Danchin A."/>
            <person name="Diard M."/>
            <person name="Dossat C."/>
            <person name="Karoui M.E."/>
            <person name="Frapy E."/>
            <person name="Garry L."/>
            <person name="Ghigo J.M."/>
            <person name="Gilles A.M."/>
            <person name="Johnson J."/>
            <person name="Le Bouguenec C."/>
            <person name="Lescat M."/>
            <person name="Mangenot S."/>
            <person name="Martinez-Jehanne V."/>
            <person name="Matic I."/>
            <person name="Nassif X."/>
            <person name="Oztas S."/>
            <person name="Petit M.A."/>
            <person name="Pichon C."/>
            <person name="Rouy Z."/>
            <person name="Ruf C.S."/>
            <person name="Schneider D."/>
            <person name="Tourret J."/>
            <person name="Vacherie B."/>
            <person name="Vallenet D."/>
            <person name="Medigue C."/>
            <person name="Rocha E.P.C."/>
            <person name="Denamur E."/>
        </authorList>
    </citation>
    <scope>NUCLEOTIDE SEQUENCE [LARGE SCALE GENOMIC DNA]</scope>
    <source>
        <strain>ED1a</strain>
    </source>
</reference>
<organism>
    <name type="scientific">Escherichia coli O81 (strain ED1a)</name>
    <dbReference type="NCBI Taxonomy" id="585397"/>
    <lineage>
        <taxon>Bacteria</taxon>
        <taxon>Pseudomonadati</taxon>
        <taxon>Pseudomonadota</taxon>
        <taxon>Gammaproteobacteria</taxon>
        <taxon>Enterobacterales</taxon>
        <taxon>Enterobacteriaceae</taxon>
        <taxon>Escherichia</taxon>
    </lineage>
</organism>
<feature type="chain" id="PRO_1000148856" description="Transcriptional regulator MraZ">
    <location>
        <begin position="1"/>
        <end position="152"/>
    </location>
</feature>
<feature type="domain" description="SpoVT-AbrB 1" evidence="2">
    <location>
        <begin position="5"/>
        <end position="52"/>
    </location>
</feature>
<feature type="domain" description="SpoVT-AbrB 2" evidence="2">
    <location>
        <begin position="81"/>
        <end position="124"/>
    </location>
</feature>
<name>MRAZ_ECO81</name>